<protein>
    <recommendedName>
        <fullName evidence="1">Glucosamine-6-phosphate deaminase</fullName>
        <ecNumber evidence="1">3.5.99.6</ecNumber>
    </recommendedName>
    <alternativeName>
        <fullName evidence="1">GlcN6P deaminase</fullName>
        <shortName evidence="1">GNPDA</shortName>
    </alternativeName>
    <alternativeName>
        <fullName evidence="1">Glucosamine-6-phosphate isomerase</fullName>
    </alternativeName>
</protein>
<feature type="chain" id="PRO_0000160182" description="Glucosamine-6-phosphate deaminase">
    <location>
        <begin position="1"/>
        <end position="234"/>
    </location>
</feature>
<feature type="active site" description="Proton acceptor; for enolization step" evidence="1">
    <location>
        <position position="62"/>
    </location>
</feature>
<feature type="active site" description="For ring-opening step" evidence="1">
    <location>
        <position position="128"/>
    </location>
</feature>
<feature type="active site" description="Proton acceptor; for ring-opening step" evidence="1">
    <location>
        <position position="130"/>
    </location>
</feature>
<feature type="active site" description="For ring-opening step" evidence="1">
    <location>
        <position position="135"/>
    </location>
</feature>
<gene>
    <name evidence="1" type="primary">nagB</name>
    <name type="ordered locus">spyM18_1407</name>
</gene>
<proteinExistence type="inferred from homology"/>
<dbReference type="EC" id="3.5.99.6" evidence="1"/>
<dbReference type="EMBL" id="AE009949">
    <property type="protein sequence ID" value="AAL97997.1"/>
    <property type="molecule type" value="Genomic_DNA"/>
</dbReference>
<dbReference type="RefSeq" id="WP_011017943.1">
    <property type="nucleotide sequence ID" value="NC_003485.1"/>
</dbReference>
<dbReference type="SMR" id="Q8P0E0"/>
<dbReference type="KEGG" id="spm:spyM18_1407"/>
<dbReference type="HOGENOM" id="CLU_049611_1_0_9"/>
<dbReference type="UniPathway" id="UPA00629">
    <property type="reaction ID" value="UER00684"/>
</dbReference>
<dbReference type="GO" id="GO:0005737">
    <property type="term" value="C:cytoplasm"/>
    <property type="evidence" value="ECO:0007669"/>
    <property type="project" value="TreeGrafter"/>
</dbReference>
<dbReference type="GO" id="GO:0004342">
    <property type="term" value="F:glucosamine-6-phosphate deaminase activity"/>
    <property type="evidence" value="ECO:0007669"/>
    <property type="project" value="UniProtKB-UniRule"/>
</dbReference>
<dbReference type="GO" id="GO:0042802">
    <property type="term" value="F:identical protein binding"/>
    <property type="evidence" value="ECO:0007669"/>
    <property type="project" value="TreeGrafter"/>
</dbReference>
<dbReference type="GO" id="GO:0005975">
    <property type="term" value="P:carbohydrate metabolic process"/>
    <property type="evidence" value="ECO:0007669"/>
    <property type="project" value="InterPro"/>
</dbReference>
<dbReference type="GO" id="GO:0006043">
    <property type="term" value="P:glucosamine catabolic process"/>
    <property type="evidence" value="ECO:0007669"/>
    <property type="project" value="TreeGrafter"/>
</dbReference>
<dbReference type="GO" id="GO:0006046">
    <property type="term" value="P:N-acetylglucosamine catabolic process"/>
    <property type="evidence" value="ECO:0007669"/>
    <property type="project" value="TreeGrafter"/>
</dbReference>
<dbReference type="GO" id="GO:0019262">
    <property type="term" value="P:N-acetylneuraminate catabolic process"/>
    <property type="evidence" value="ECO:0007669"/>
    <property type="project" value="UniProtKB-UniRule"/>
</dbReference>
<dbReference type="CDD" id="cd01399">
    <property type="entry name" value="GlcN6P_deaminase"/>
    <property type="match status" value="1"/>
</dbReference>
<dbReference type="FunFam" id="3.40.50.1360:FF:000003">
    <property type="entry name" value="Glucosamine-6-phosphate deaminase"/>
    <property type="match status" value="1"/>
</dbReference>
<dbReference type="Gene3D" id="3.40.50.1360">
    <property type="match status" value="1"/>
</dbReference>
<dbReference type="HAMAP" id="MF_01241">
    <property type="entry name" value="GlcN6P_deamin"/>
    <property type="match status" value="1"/>
</dbReference>
<dbReference type="InterPro" id="IPR006148">
    <property type="entry name" value="Glc/Gal-6P_isomerase"/>
</dbReference>
<dbReference type="InterPro" id="IPR004547">
    <property type="entry name" value="Glucosamine6P_isomerase"/>
</dbReference>
<dbReference type="InterPro" id="IPR018321">
    <property type="entry name" value="Glucosamine6P_isomerase_CS"/>
</dbReference>
<dbReference type="InterPro" id="IPR037171">
    <property type="entry name" value="NagB/RpiA_transferase-like"/>
</dbReference>
<dbReference type="NCBIfam" id="TIGR00502">
    <property type="entry name" value="nagB"/>
    <property type="match status" value="1"/>
</dbReference>
<dbReference type="PANTHER" id="PTHR11280">
    <property type="entry name" value="GLUCOSAMINE-6-PHOSPHATE ISOMERASE"/>
    <property type="match status" value="1"/>
</dbReference>
<dbReference type="PANTHER" id="PTHR11280:SF5">
    <property type="entry name" value="GLUCOSAMINE-6-PHOSPHATE ISOMERASE"/>
    <property type="match status" value="1"/>
</dbReference>
<dbReference type="Pfam" id="PF01182">
    <property type="entry name" value="Glucosamine_iso"/>
    <property type="match status" value="1"/>
</dbReference>
<dbReference type="SUPFAM" id="SSF100950">
    <property type="entry name" value="NagB/RpiA/CoA transferase-like"/>
    <property type="match status" value="1"/>
</dbReference>
<dbReference type="PROSITE" id="PS01161">
    <property type="entry name" value="GLC_GALNAC_ISOMERASE"/>
    <property type="match status" value="1"/>
</dbReference>
<evidence type="ECO:0000255" key="1">
    <source>
        <dbReference type="HAMAP-Rule" id="MF_01241"/>
    </source>
</evidence>
<name>NAGB_STRP8</name>
<sequence length="234" mass="25790">MKIIRVQDQIEGGKIAFTLLKDSLAKGAKTLGLATGSSPISFYQEMVKSPLDFSDLTSINLDEYVGLSVESDQSYDYFMRQNLFNAKPFKKNYLPNGLATNIEAEAKRYDQIIAEHPIDFQVLGIGRNGHIGFNEPGTSFKEETHVVDLQESTIEANSRFFTSIEDVPKQAISMGIASIMKSKMIVLLAFGQEKADAIKGMVFGPITEDLPASILQKHDHVIVIVDEAAASQLD</sequence>
<reference key="1">
    <citation type="journal article" date="2002" name="Proc. Natl. Acad. Sci. U.S.A.">
        <title>Genome sequence and comparative microarray analysis of serotype M18 group A Streptococcus strains associated with acute rheumatic fever outbreaks.</title>
        <authorList>
            <person name="Smoot J.C."/>
            <person name="Barbian K.D."/>
            <person name="Van Gompel J.J."/>
            <person name="Smoot L.M."/>
            <person name="Chaussee M.S."/>
            <person name="Sylva G.L."/>
            <person name="Sturdevant D.E."/>
            <person name="Ricklefs S.M."/>
            <person name="Porcella S.F."/>
            <person name="Parkins L.D."/>
            <person name="Beres S.B."/>
            <person name="Campbell D.S."/>
            <person name="Smith T.M."/>
            <person name="Zhang Q."/>
            <person name="Kapur V."/>
            <person name="Daly J.A."/>
            <person name="Veasy L.G."/>
            <person name="Musser J.M."/>
        </authorList>
    </citation>
    <scope>NUCLEOTIDE SEQUENCE [LARGE SCALE GENOMIC DNA]</scope>
    <source>
        <strain>MGAS8232</strain>
    </source>
</reference>
<comment type="function">
    <text evidence="1">Catalyzes the reversible isomerization-deamination of glucosamine 6-phosphate (GlcN6P) to form fructose 6-phosphate (Fru6P) and ammonium ion.</text>
</comment>
<comment type="catalytic activity">
    <reaction evidence="1">
        <text>alpha-D-glucosamine 6-phosphate + H2O = beta-D-fructose 6-phosphate + NH4(+)</text>
        <dbReference type="Rhea" id="RHEA:12172"/>
        <dbReference type="ChEBI" id="CHEBI:15377"/>
        <dbReference type="ChEBI" id="CHEBI:28938"/>
        <dbReference type="ChEBI" id="CHEBI:57634"/>
        <dbReference type="ChEBI" id="CHEBI:75989"/>
        <dbReference type="EC" id="3.5.99.6"/>
    </reaction>
</comment>
<comment type="pathway">
    <text evidence="1">Amino-sugar metabolism; N-acetylneuraminate degradation; D-fructose 6-phosphate from N-acetylneuraminate: step 5/5.</text>
</comment>
<comment type="similarity">
    <text evidence="1">Belongs to the glucosamine/galactosamine-6-phosphate isomerase family. NagB subfamily.</text>
</comment>
<accession>Q8P0E0</accession>
<organism>
    <name type="scientific">Streptococcus pyogenes serotype M18 (strain MGAS8232)</name>
    <dbReference type="NCBI Taxonomy" id="186103"/>
    <lineage>
        <taxon>Bacteria</taxon>
        <taxon>Bacillati</taxon>
        <taxon>Bacillota</taxon>
        <taxon>Bacilli</taxon>
        <taxon>Lactobacillales</taxon>
        <taxon>Streptococcaceae</taxon>
        <taxon>Streptococcus</taxon>
    </lineage>
</organism>
<keyword id="KW-0119">Carbohydrate metabolism</keyword>
<keyword id="KW-0378">Hydrolase</keyword>